<evidence type="ECO:0000250" key="1">
    <source>
        <dbReference type="UniProtKB" id="E5FYH1"/>
    </source>
</evidence>
<evidence type="ECO:0000256" key="2">
    <source>
        <dbReference type="SAM" id="MobiDB-lite"/>
    </source>
</evidence>
<name>TOPZ1_BOVIN</name>
<protein>
    <recommendedName>
        <fullName evidence="1">Protein TOPAZ1</fullName>
    </recommendedName>
    <alternativeName>
        <fullName evidence="1">Testis- and ovary-specific PAZ domain-containing protein 1</fullName>
    </alternativeName>
</protein>
<organism>
    <name type="scientific">Bos taurus</name>
    <name type="common">Bovine</name>
    <dbReference type="NCBI Taxonomy" id="9913"/>
    <lineage>
        <taxon>Eukaryota</taxon>
        <taxon>Metazoa</taxon>
        <taxon>Chordata</taxon>
        <taxon>Craniata</taxon>
        <taxon>Vertebrata</taxon>
        <taxon>Euteleostomi</taxon>
        <taxon>Mammalia</taxon>
        <taxon>Eutheria</taxon>
        <taxon>Laurasiatheria</taxon>
        <taxon>Artiodactyla</taxon>
        <taxon>Ruminantia</taxon>
        <taxon>Pecora</taxon>
        <taxon>Bovidae</taxon>
        <taxon>Bovinae</taxon>
        <taxon>Bos</taxon>
    </lineage>
</organism>
<proteinExistence type="evidence at transcript level"/>
<gene>
    <name type="primary">TOPAZ1</name>
</gene>
<sequence length="1653" mass="185726">MPRAPPSGPTTAPGREDDARGLRKRSRRPGLGEAGGCGPEAEGLEESRQKRRMVARASGREEVESDKSAKEKRKVTEASSDDPQPGIDLVRKESLTSSESFPTVECSEFQSMAFLQSLGKERLVEGIKRRIRIKKCKSLESPALKMTENKATQNSKVEFQDELYKNTLKYSCNSLSPGVENNSVLKLHDCSCLSHSKDCNDENNLAYKPDGGCMHVPENSSKSKKENPRSLIDKTDPSNIPQLLQTEENVMRVSQLLLEENDSYLSKNNGLFSCLQSEKTKHSIEESSIGRKSRKRMKVSEKGNGMVIEMKFSNMCNKSELMLQGNQTGADGKETEILEAKKSSLKVLRKVNNNTLSPMDPLLSLPETGKKTSPEHCANAVFQKALEQLSKEETKNVSQPLGCTSMDPPEDYFKSMKNSLVKSLSDCFPIEKRSSRESLKNEAEESKYSCQRTIPMTGKRTWPCYSCARISAQCWKKASLPQSSRQDDFLKHQMNQTHLTDSKLMLQSSVTETNSASSSIEKLDSNLNCLPSVSTVEPTSVVIKEPIVNDDEKMKSEELSRSASEVVSNTTEDTSLTNMTHNLTGSKKKDRGNLTKLNLTVASQDGQEANNSTSKTVHRKACITKQALVVPDLVKILNTGRLTNFKIPLLKNKTEKRKEINAKSSEREVYSPLELLDSVSGAEVRQSRTKENAVTVTSGPQSLSIQRSVIPVQASSDSFCSKNSCIIAPSFLKQGNNKQPSNHISASGRIISNNAAGSLTVENNTFSCDPGCIEKNPTFYSNEQEPFKAVSSEVSGRKMTENFSEIKVGFPDILKAYEDDVLLIDVIQDDPDLFGVSNEGELSFPSEVPMISQEPNVAEEHQSTDSKHMELPDKKEPSNALRELPVPDPGSMKSEICASLSAASEIKHDSKDANISLGEVTHETSSNEKPRGLSEQTKSSDLDEKCRFSDKVAIREEKETISEVCRRDSKNTEIMVGECHLAALVSKPLCLPVPLPPLNLNAHQEDTLLNPQMNDFRLPGKHSVLKLQNPEICEIFKREKNVGVFQKPLGLMIPHRYCKFHFNTLRGCERSQCKFGHVPEQGDEKVCMDVFKKYISINELCLLQRAANMFMEYYRKFLPGIHFDLQVLNDLLSSLLKHCLLKEVFQVMNLCIMIKMLPALKILLKIFEYVATMKLRNAVPALINIFCKLLEAGMVLDPEHFNYIVKLLYQVQASKQEITAVLEMKSRLHMRQFKKNWKCDLEAALNEIEHCKEKGDWTKLGNVYLNIKMSCEKFADFQRFCACIAETLTKDCKEERPGVPFCEFAETVSKDLQNSEVDKTLLGRIGISAMYFYHKLLQWSKGRKVLDKLYELKIHFTSLKGLIGPEKLAPRCQIVNIAAEIFLKSGSLDGAIWVLRESEWIINTPVWPCDRLDVLNRHNLLCTIAHEILAKSLYRQTFEVLQNLPGFQNSQETVEVSQYSLLFNKLLDACIESNSLGMSSSVAEFMISKSIPIDFSFLRRLITSLGRSCLWLKARAHYKSALSLGCYPPLEGNLYRKLLLIPSYLSEIEMLLAIEIFLVSNASSIQSPGTSTQMLQIVLKRSEENKSRSKDDYQAAVERLITAARISDPKLFIKHMTVNVNKEQVYSLEQCSALKWLKENMKWAGKVWLFNNH</sequence>
<dbReference type="EMBL" id="BK008402">
    <property type="protein sequence ID" value="DAA34974.1"/>
    <property type="molecule type" value="mRNA"/>
</dbReference>
<dbReference type="RefSeq" id="NP_001239370.1">
    <property type="nucleotide sequence ID" value="NM_001252441.1"/>
</dbReference>
<dbReference type="FunCoup" id="G7H7V7">
    <property type="interactions" value="26"/>
</dbReference>
<dbReference type="STRING" id="9913.ENSBTAP00000053356"/>
<dbReference type="PaxDb" id="9913-ENSBTAP00000053356"/>
<dbReference type="Ensembl" id="ENSBTAT00000061088.4">
    <property type="protein sequence ID" value="ENSBTAP00000053356.3"/>
    <property type="gene ID" value="ENSBTAG00000044167.4"/>
</dbReference>
<dbReference type="GeneID" id="100296400"/>
<dbReference type="KEGG" id="bta:100296400"/>
<dbReference type="CTD" id="375337"/>
<dbReference type="VEuPathDB" id="HostDB:ENSBTAG00000044167"/>
<dbReference type="VGNC" id="VGNC:36221">
    <property type="gene designation" value="TOPAZ1"/>
</dbReference>
<dbReference type="eggNOG" id="ENOG502QPIV">
    <property type="taxonomic scope" value="Eukaryota"/>
</dbReference>
<dbReference type="GeneTree" id="ENSGT00390000012495"/>
<dbReference type="InParanoid" id="G7H7V7"/>
<dbReference type="OMA" id="SPNEYHI"/>
<dbReference type="OrthoDB" id="8859650at2759"/>
<dbReference type="Proteomes" id="UP000009136">
    <property type="component" value="Chromosome 22"/>
</dbReference>
<dbReference type="Bgee" id="ENSBTAG00000044167">
    <property type="expression patterns" value="Expressed in oocyte and 8 other cell types or tissues"/>
</dbReference>
<dbReference type="GO" id="GO:0005829">
    <property type="term" value="C:cytosol"/>
    <property type="evidence" value="ECO:0007669"/>
    <property type="project" value="UniProtKB-SubCell"/>
</dbReference>
<dbReference type="GO" id="GO:0006915">
    <property type="term" value="P:apoptotic process"/>
    <property type="evidence" value="ECO:0007669"/>
    <property type="project" value="Ensembl"/>
</dbReference>
<dbReference type="GO" id="GO:0035234">
    <property type="term" value="P:ectopic germ cell programmed cell death"/>
    <property type="evidence" value="ECO:0007669"/>
    <property type="project" value="Ensembl"/>
</dbReference>
<dbReference type="GO" id="GO:0140742">
    <property type="term" value="P:lncRNA transcription"/>
    <property type="evidence" value="ECO:0007669"/>
    <property type="project" value="Ensembl"/>
</dbReference>
<dbReference type="GO" id="GO:0048137">
    <property type="term" value="P:spermatocyte division"/>
    <property type="evidence" value="ECO:0000318"/>
    <property type="project" value="GO_Central"/>
</dbReference>
<dbReference type="InterPro" id="IPR038952">
    <property type="entry name" value="TOPAZ1"/>
</dbReference>
<dbReference type="InterPro" id="IPR029435">
    <property type="entry name" value="TOPAZ1_dom"/>
</dbReference>
<dbReference type="PANTHER" id="PTHR35671">
    <property type="entry name" value="PROTEIN TOPAZ1"/>
    <property type="match status" value="1"/>
</dbReference>
<dbReference type="PANTHER" id="PTHR35671:SF1">
    <property type="entry name" value="PROTEIN TOPAZ1"/>
    <property type="match status" value="1"/>
</dbReference>
<dbReference type="Pfam" id="PF14669">
    <property type="entry name" value="Asp_Glu_race_2"/>
    <property type="match status" value="1"/>
</dbReference>
<feature type="chain" id="PRO_0000416056" description="Protein TOPAZ1">
    <location>
        <begin position="1"/>
        <end position="1653"/>
    </location>
</feature>
<feature type="region of interest" description="Disordered" evidence="2">
    <location>
        <begin position="1"/>
        <end position="88"/>
    </location>
</feature>
<feature type="region of interest" description="Disordered" evidence="2">
    <location>
        <begin position="212"/>
        <end position="238"/>
    </location>
</feature>
<feature type="region of interest" description="Disordered" evidence="2">
    <location>
        <begin position="553"/>
        <end position="591"/>
    </location>
</feature>
<feature type="region of interest" description="Disordered" evidence="2">
    <location>
        <begin position="855"/>
        <end position="893"/>
    </location>
</feature>
<feature type="region of interest" description="Disordered" evidence="2">
    <location>
        <begin position="919"/>
        <end position="942"/>
    </location>
</feature>
<feature type="compositionally biased region" description="Basic and acidic residues" evidence="2">
    <location>
        <begin position="58"/>
        <end position="69"/>
    </location>
</feature>
<feature type="compositionally biased region" description="Basic and acidic residues" evidence="2">
    <location>
        <begin position="221"/>
        <end position="236"/>
    </location>
</feature>
<feature type="compositionally biased region" description="Polar residues" evidence="2">
    <location>
        <begin position="561"/>
        <end position="585"/>
    </location>
</feature>
<feature type="compositionally biased region" description="Basic and acidic residues" evidence="2">
    <location>
        <begin position="858"/>
        <end position="877"/>
    </location>
</feature>
<feature type="compositionally biased region" description="Basic and acidic residues" evidence="2">
    <location>
        <begin position="920"/>
        <end position="942"/>
    </location>
</feature>
<keyword id="KW-0963">Cytoplasm</keyword>
<keyword id="KW-0221">Differentiation</keyword>
<keyword id="KW-1185">Reference proteome</keyword>
<keyword id="KW-0744">Spermatogenesis</keyword>
<comment type="function">
    <text evidence="1">Important for normal spermatogenesis and male fertility. Specifically required for progression to the post-meiotic stages of spermatocyte development. Seems to be necessary for normal expression levels of a number of testis-expressed gene transcripts, although its role in this process is unclear.</text>
</comment>
<comment type="subcellular location">
    <subcellularLocation>
        <location evidence="1">Cytoplasm</location>
        <location evidence="1">Cytosol</location>
    </subcellularLocation>
</comment>
<accession>G7H7V7</accession>
<reference key="1">
    <citation type="journal article" date="2009" name="Genome Biol.">
        <title>A whole-genome assembly of the domestic cow, Bos taurus.</title>
        <authorList>
            <person name="Zimin A.V."/>
            <person name="Delcher A.L."/>
            <person name="Florea L."/>
            <person name="Kelley D.R."/>
            <person name="Schatz M.C."/>
            <person name="Puiu D."/>
            <person name="Hanrahan F."/>
            <person name="Pertea G."/>
            <person name="Van Tassell C.P."/>
            <person name="Sonstegard T.S."/>
            <person name="Marcais G."/>
            <person name="Roberts M."/>
            <person name="Subramanian P."/>
            <person name="Yorke J.A."/>
            <person name="Salzberg S.L."/>
        </authorList>
    </citation>
    <scope>NUCLEOTIDE SEQUENCE [LARGE SCALE GENOMIC DNA]</scope>
    <source>
        <strain>Hereford</strain>
    </source>
</reference>
<reference key="2">
    <citation type="journal article" date="2011" name="PLoS ONE">
        <title>TOPAZ1, a novel germ cell-specific expressed gene conserved during evolution across vertebrates.</title>
        <authorList>
            <person name="Baillet A."/>
            <person name="Le Bouffant R."/>
            <person name="Volff J.N."/>
            <person name="Luangpraseuth A."/>
            <person name="Poumerol E."/>
            <person name="Thepot D."/>
            <person name="Pailhoux E."/>
            <person name="Livera G."/>
            <person name="Cotinot C."/>
            <person name="Mandon-Pepin B."/>
        </authorList>
    </citation>
    <scope>IDENTIFICATION</scope>
</reference>